<proteinExistence type="evidence at protein level"/>
<keyword id="KW-0021">Allosteric enzyme</keyword>
<keyword id="KW-0963">Cytoplasm</keyword>
<keyword id="KW-0903">Direct protein sequencing</keyword>
<keyword id="KW-0520">NAD</keyword>
<keyword id="KW-0560">Oxidoreductase</keyword>
<keyword id="KW-0597">Phosphoprotein</keyword>
<feature type="chain" id="PRO_0000168404" description="L-lactate dehydrogenase">
    <location>
        <begin position="1"/>
        <end position="310"/>
    </location>
</feature>
<feature type="active site" description="Proton acceptor" evidence="1">
    <location>
        <position position="172"/>
    </location>
</feature>
<feature type="binding site" evidence="1">
    <location>
        <position position="11"/>
    </location>
    <ligand>
        <name>NAD(+)</name>
        <dbReference type="ChEBI" id="CHEBI:57540"/>
    </ligand>
</feature>
<feature type="binding site" evidence="1">
    <location>
        <position position="32"/>
    </location>
    <ligand>
        <name>NAD(+)</name>
        <dbReference type="ChEBI" id="CHEBI:57540"/>
    </ligand>
</feature>
<feature type="binding site" evidence="1">
    <location>
        <position position="62"/>
    </location>
    <ligand>
        <name>NAD(+)</name>
        <dbReference type="ChEBI" id="CHEBI:57540"/>
    </ligand>
</feature>
<feature type="binding site" evidence="1">
    <location>
        <begin position="76"/>
        <end position="77"/>
    </location>
    <ligand>
        <name>NAD(+)</name>
        <dbReference type="ChEBI" id="CHEBI:57540"/>
    </ligand>
</feature>
<feature type="binding site" evidence="1">
    <location>
        <position position="79"/>
    </location>
    <ligand>
        <name>substrate</name>
    </ligand>
</feature>
<feature type="binding site" evidence="1">
    <location>
        <position position="85"/>
    </location>
    <ligand>
        <name>substrate</name>
    </ligand>
</feature>
<feature type="binding site" evidence="1">
    <location>
        <begin position="115"/>
        <end position="117"/>
    </location>
    <ligand>
        <name>NAD(+)</name>
        <dbReference type="ChEBI" id="CHEBI:57540"/>
    </ligand>
</feature>
<feature type="binding site" evidence="1">
    <location>
        <begin position="117"/>
        <end position="120"/>
    </location>
    <ligand>
        <name>substrate</name>
    </ligand>
</feature>
<feature type="binding site" evidence="1">
    <location>
        <position position="140"/>
    </location>
    <ligand>
        <name>NAD(+)</name>
        <dbReference type="ChEBI" id="CHEBI:57540"/>
    </ligand>
</feature>
<feature type="binding site" evidence="1">
    <location>
        <begin position="145"/>
        <end position="148"/>
    </location>
    <ligand>
        <name>substrate</name>
    </ligand>
</feature>
<feature type="binding site" evidence="1">
    <location>
        <position position="150"/>
    </location>
    <ligand>
        <name>beta-D-fructose 1,6-bisphosphate</name>
        <dbReference type="ChEBI" id="CHEBI:32966"/>
        <note>allosteric activator</note>
    </ligand>
</feature>
<feature type="binding site" evidence="1">
    <location>
        <position position="165"/>
    </location>
    <ligand>
        <name>beta-D-fructose 1,6-bisphosphate</name>
        <dbReference type="ChEBI" id="CHEBI:32966"/>
        <note>allosteric activator</note>
    </ligand>
</feature>
<feature type="binding site" evidence="1">
    <location>
        <position position="227"/>
    </location>
    <ligand>
        <name>substrate</name>
    </ligand>
</feature>
<feature type="modified residue" description="Phosphotyrosine" evidence="1">
    <location>
        <position position="218"/>
    </location>
</feature>
<comment type="function">
    <text evidence="1 2">Catalyzes the conversion of lactate to pyruvate.</text>
</comment>
<comment type="catalytic activity">
    <reaction evidence="1 2">
        <text>(S)-lactate + NAD(+) = pyruvate + NADH + H(+)</text>
        <dbReference type="Rhea" id="RHEA:23444"/>
        <dbReference type="ChEBI" id="CHEBI:15361"/>
        <dbReference type="ChEBI" id="CHEBI:15378"/>
        <dbReference type="ChEBI" id="CHEBI:16651"/>
        <dbReference type="ChEBI" id="CHEBI:57540"/>
        <dbReference type="ChEBI" id="CHEBI:57945"/>
        <dbReference type="EC" id="1.1.1.27"/>
    </reaction>
</comment>
<comment type="activity regulation">
    <text evidence="2">Activated by citrate at pH 5. Allosterically activated by fructose 1,6-bisphosphate (FBP) at pH from 5.8 to 7.2.</text>
</comment>
<comment type="biophysicochemical properties">
    <kinetics>
        <Vmax evidence="2">77.0 umol/min/mg enzyme</Vmax>
    </kinetics>
    <phDependence>
        <text evidence="2">Optimum pH is 5 and 6.7 with citrate and fructose 1,6-bisphosphate (FBP) as activator, respectively.</text>
    </phDependence>
</comment>
<comment type="pathway">
    <text evidence="1">Fermentation; pyruvate fermentation to lactate; (S)-lactate from pyruvate: step 1/1.</text>
</comment>
<comment type="subunit">
    <text evidence="1 2">Homotetramer.</text>
</comment>
<comment type="subcellular location">
    <subcellularLocation>
        <location evidence="1">Cytoplasm</location>
    </subcellularLocation>
</comment>
<comment type="similarity">
    <text evidence="1 4">Belongs to the LDH/MDH superfamily. LDH family.</text>
</comment>
<organism>
    <name type="scientific">Thermus aquaticus</name>
    <dbReference type="NCBI Taxonomy" id="271"/>
    <lineage>
        <taxon>Bacteria</taxon>
        <taxon>Thermotogati</taxon>
        <taxon>Deinococcota</taxon>
        <taxon>Deinococci</taxon>
        <taxon>Thermales</taxon>
        <taxon>Thermaceae</taxon>
        <taxon>Thermus</taxon>
    </lineage>
</organism>
<protein>
    <recommendedName>
        <fullName evidence="1 3">L-lactate dehydrogenase</fullName>
        <shortName evidence="1 3">L-LDH</shortName>
        <ecNumber evidence="1 2">1.1.1.27</ecNumber>
    </recommendedName>
</protein>
<dbReference type="EC" id="1.1.1.27" evidence="1 2"/>
<dbReference type="EMBL" id="D00585">
    <property type="protein sequence ID" value="BAA00463.1"/>
    <property type="molecule type" value="Genomic_DNA"/>
</dbReference>
<dbReference type="PIR" id="JX0090">
    <property type="entry name" value="JX0090"/>
</dbReference>
<dbReference type="RefSeq" id="WP_053768332.1">
    <property type="nucleotide sequence ID" value="NZ_LHCI01000106.1"/>
</dbReference>
<dbReference type="SMR" id="P13715"/>
<dbReference type="UniPathway" id="UPA00554">
    <property type="reaction ID" value="UER00611"/>
</dbReference>
<dbReference type="GO" id="GO:0005737">
    <property type="term" value="C:cytoplasm"/>
    <property type="evidence" value="ECO:0007669"/>
    <property type="project" value="UniProtKB-SubCell"/>
</dbReference>
<dbReference type="GO" id="GO:0004459">
    <property type="term" value="F:L-lactate dehydrogenase activity"/>
    <property type="evidence" value="ECO:0007669"/>
    <property type="project" value="UniProtKB-UniRule"/>
</dbReference>
<dbReference type="GO" id="GO:0006096">
    <property type="term" value="P:glycolytic process"/>
    <property type="evidence" value="ECO:0007669"/>
    <property type="project" value="UniProtKB-UniRule"/>
</dbReference>
<dbReference type="GO" id="GO:0006089">
    <property type="term" value="P:lactate metabolic process"/>
    <property type="evidence" value="ECO:0007669"/>
    <property type="project" value="TreeGrafter"/>
</dbReference>
<dbReference type="CDD" id="cd05292">
    <property type="entry name" value="LDH_2"/>
    <property type="match status" value="1"/>
</dbReference>
<dbReference type="Gene3D" id="3.90.110.10">
    <property type="entry name" value="Lactate dehydrogenase/glycoside hydrolase, family 4, C-terminal"/>
    <property type="match status" value="1"/>
</dbReference>
<dbReference type="Gene3D" id="3.40.50.720">
    <property type="entry name" value="NAD(P)-binding Rossmann-like Domain"/>
    <property type="match status" value="1"/>
</dbReference>
<dbReference type="HAMAP" id="MF_00488">
    <property type="entry name" value="Lactate_dehydrog"/>
    <property type="match status" value="1"/>
</dbReference>
<dbReference type="InterPro" id="IPR001557">
    <property type="entry name" value="L-lactate/malate_DH"/>
</dbReference>
<dbReference type="InterPro" id="IPR011304">
    <property type="entry name" value="L-lactate_DH"/>
</dbReference>
<dbReference type="InterPro" id="IPR018177">
    <property type="entry name" value="L-lactate_DH_AS"/>
</dbReference>
<dbReference type="InterPro" id="IPR022383">
    <property type="entry name" value="Lactate/malate_DH_C"/>
</dbReference>
<dbReference type="InterPro" id="IPR001236">
    <property type="entry name" value="Lactate/malate_DH_N"/>
</dbReference>
<dbReference type="InterPro" id="IPR015955">
    <property type="entry name" value="Lactate_DH/Glyco_Ohase_4_C"/>
</dbReference>
<dbReference type="InterPro" id="IPR036291">
    <property type="entry name" value="NAD(P)-bd_dom_sf"/>
</dbReference>
<dbReference type="NCBIfam" id="TIGR01771">
    <property type="entry name" value="L-LDH-NAD"/>
    <property type="match status" value="1"/>
</dbReference>
<dbReference type="NCBIfam" id="NF000824">
    <property type="entry name" value="PRK00066.1"/>
    <property type="match status" value="1"/>
</dbReference>
<dbReference type="PANTHER" id="PTHR43128">
    <property type="entry name" value="L-2-HYDROXYCARBOXYLATE DEHYDROGENASE (NAD(P)(+))"/>
    <property type="match status" value="1"/>
</dbReference>
<dbReference type="PANTHER" id="PTHR43128:SF16">
    <property type="entry name" value="L-LACTATE DEHYDROGENASE"/>
    <property type="match status" value="1"/>
</dbReference>
<dbReference type="Pfam" id="PF02866">
    <property type="entry name" value="Ldh_1_C"/>
    <property type="match status" value="1"/>
</dbReference>
<dbReference type="Pfam" id="PF00056">
    <property type="entry name" value="Ldh_1_N"/>
    <property type="match status" value="1"/>
</dbReference>
<dbReference type="PIRSF" id="PIRSF000102">
    <property type="entry name" value="Lac_mal_DH"/>
    <property type="match status" value="1"/>
</dbReference>
<dbReference type="PRINTS" id="PR00086">
    <property type="entry name" value="LLDHDRGNASE"/>
</dbReference>
<dbReference type="SUPFAM" id="SSF56327">
    <property type="entry name" value="LDH C-terminal domain-like"/>
    <property type="match status" value="1"/>
</dbReference>
<dbReference type="SUPFAM" id="SSF51735">
    <property type="entry name" value="NAD(P)-binding Rossmann-fold domains"/>
    <property type="match status" value="1"/>
</dbReference>
<dbReference type="PROSITE" id="PS00064">
    <property type="entry name" value="L_LDH"/>
    <property type="match status" value="1"/>
</dbReference>
<reference key="1">
    <citation type="journal article" date="1990" name="J. Biochem.">
        <title>Nucleotide sequence and characteristics of the gene for L-lactate dehydrogenase of Thermus aquaticus YT-1 and the deduced amino acid sequence of the enzyme.</title>
        <authorList>
            <person name="Ono M."/>
            <person name="Matsuzawa H."/>
            <person name="Ohta T."/>
        </authorList>
    </citation>
    <scope>NUCLEOTIDE SEQUENCE [GENOMIC DNA]</scope>
    <source>
        <strain>ATCC 25104 / DSM 625 / JCM 10724 / NBRC 103206 / NCIMB 11243 / YT-1</strain>
    </source>
</reference>
<reference key="2">
    <citation type="journal article" date="1985" name="J. Biochem.">
        <title>Fructose 1,6-bisphosphate-dependent L-lactate dehydrogenase from Thermus aquaticus YT-1, an extreme thermophile: activation by citrate and modification reagents and comparison with Thermus caldophilus GK24 L-lactate dehydrogenase.</title>
        <authorList>
            <person name="Machida M."/>
            <person name="Matsuzawa H."/>
            <person name="Ohta T."/>
        </authorList>
    </citation>
    <scope>PROTEIN SEQUENCE OF 1-34</scope>
    <scope>FUNCTION</scope>
    <scope>CATALYTIC ACTIVITY</scope>
    <scope>ACTIVITY REGULATION</scope>
    <scope>BIOPHYSICOCHEMICAL PROPERTIES</scope>
    <scope>SUBUNIT</scope>
    <source>
        <strain>ATCC 25104 / DSM 625 / JCM 10724 / NBRC 103206 / NCIMB 11243 / YT-1</strain>
    </source>
</reference>
<name>LDH_THEAQ</name>
<accession>P13715</accession>
<sequence length="310" mass="33210">MKVGIVGSGFVGSATAYALVLQGVAREVVLVDLDRKLAQAHAEDILHATPFAHPVWVRSGWYEDLEGARVVIVAAGVAQRPGETRLQLLDRNAQVFADVVPKILKAAPEAVLLIATNPVDVMTQVAYRLSGLPPERVVGSGTILDTARFRALLAQHLLVAPQSVHAYVVGEHGDSEVLVWSSAQVGGVDLEAFAQARGRALTPDDRLRIDEGVRRAAYRIIEGKGATYYGIGAGLARLTRAILTDEKGVFTVSLFTPEVEGVEEVALSLPRILGARGVEATLYPRLNEEERQALRRSAEILKGAASALGF</sequence>
<evidence type="ECO:0000255" key="1">
    <source>
        <dbReference type="HAMAP-Rule" id="MF_00488"/>
    </source>
</evidence>
<evidence type="ECO:0000269" key="2">
    <source>
    </source>
</evidence>
<evidence type="ECO:0000303" key="3">
    <source>
    </source>
</evidence>
<evidence type="ECO:0000305" key="4"/>
<gene>
    <name evidence="1 3" type="primary">ldh</name>
</gene>